<feature type="chain" id="PRO_0000208728" description="GTP-binding nuclear protein GSP1/Ran">
    <location>
        <begin position="1"/>
        <end position="214"/>
    </location>
</feature>
<feature type="domain" description="Small GTPase Ran-type" evidence="3">
    <location>
        <begin position="4"/>
        <end position="168"/>
    </location>
</feature>
<feature type="region of interest" description="Switch-I" evidence="3">
    <location>
        <begin position="34"/>
        <end position="42"/>
    </location>
</feature>
<feature type="region of interest" description="Switch-II" evidence="3">
    <location>
        <begin position="65"/>
        <end position="81"/>
    </location>
</feature>
<feature type="binding site" evidence="2">
    <location>
        <begin position="15"/>
        <end position="22"/>
    </location>
    <ligand>
        <name>GTP</name>
        <dbReference type="ChEBI" id="CHEBI:37565"/>
    </ligand>
</feature>
<feature type="binding site" evidence="2">
    <location>
        <position position="65"/>
    </location>
    <ligand>
        <name>GTP</name>
        <dbReference type="ChEBI" id="CHEBI:37565"/>
    </ligand>
</feature>
<feature type="binding site" evidence="2">
    <location>
        <begin position="119"/>
        <end position="122"/>
    </location>
    <ligand>
        <name>GTP</name>
        <dbReference type="ChEBI" id="CHEBI:37565"/>
    </ligand>
</feature>
<feature type="binding site" evidence="2">
    <location>
        <begin position="147"/>
        <end position="149"/>
    </location>
    <ligand>
        <name>GTP</name>
        <dbReference type="ChEBI" id="CHEBI:37565"/>
    </ligand>
</feature>
<proteinExistence type="inferred from homology"/>
<organism>
    <name type="scientific">Eremothecium gossypii (strain ATCC 10895 / CBS 109.51 / FGSC 9923 / NRRL Y-1056)</name>
    <name type="common">Yeast</name>
    <name type="synonym">Ashbya gossypii</name>
    <dbReference type="NCBI Taxonomy" id="284811"/>
    <lineage>
        <taxon>Eukaryota</taxon>
        <taxon>Fungi</taxon>
        <taxon>Dikarya</taxon>
        <taxon>Ascomycota</taxon>
        <taxon>Saccharomycotina</taxon>
        <taxon>Saccharomycetes</taxon>
        <taxon>Saccharomycetales</taxon>
        <taxon>Saccharomycetaceae</taxon>
        <taxon>Eremothecium</taxon>
    </lineage>
</organism>
<protein>
    <recommendedName>
        <fullName>GTP-binding nuclear protein GSP1/Ran</fullName>
    </recommendedName>
</protein>
<name>GSP1_EREGS</name>
<accession>Q74ZA9</accession>
<reference key="1">
    <citation type="journal article" date="2004" name="Science">
        <title>The Ashbya gossypii genome as a tool for mapping the ancient Saccharomyces cerevisiae genome.</title>
        <authorList>
            <person name="Dietrich F.S."/>
            <person name="Voegeli S."/>
            <person name="Brachat S."/>
            <person name="Lerch A."/>
            <person name="Gates K."/>
            <person name="Steiner S."/>
            <person name="Mohr C."/>
            <person name="Poehlmann R."/>
            <person name="Luedi P."/>
            <person name="Choi S."/>
            <person name="Wing R.A."/>
            <person name="Flavier A."/>
            <person name="Gaffney T.D."/>
            <person name="Philippsen P."/>
        </authorList>
    </citation>
    <scope>NUCLEOTIDE SEQUENCE [LARGE SCALE GENOMIC DNA]</scope>
    <source>
        <strain>ATCC 10895 / CBS 109.51 / FGSC 9923 / NRRL Y-1056</strain>
    </source>
</reference>
<reference key="2">
    <citation type="journal article" date="2013" name="G3 (Bethesda)">
        <title>Genomes of Ashbya fungi isolated from insects reveal four mating-type loci, numerous translocations, lack of transposons, and distinct gene duplications.</title>
        <authorList>
            <person name="Dietrich F.S."/>
            <person name="Voegeli S."/>
            <person name="Kuo S."/>
            <person name="Philippsen P."/>
        </authorList>
    </citation>
    <scope>GENOME REANNOTATION</scope>
    <source>
        <strain>ATCC 10895 / CBS 109.51 / FGSC 9923 / NRRL Y-1056</strain>
    </source>
</reference>
<sequence length="214" mass="24368">MAAEVPTFKLVLVGDGGTGKTTFVKRHLTGEFEKKYIATIGVEVHPLAFYTNFGEIKFDVWDTAGQEKFGGLRDGYYINAQCGIIMFDVTSRITYKNVPNWHRDLVRVCENIPIVLCGNKVDVKERKVKAKTITFHRKKNLQYYDISAKSNYNFEKPFLWLARKLAGNPQLDFVASPALAPPEVQVDEQLMQQYQQEMERATALPLPDEDDADL</sequence>
<comment type="function">
    <text evidence="1">GTP-binding protein involved in nucleocytoplasmic transport. Required for the import of protein into the nucleus and also for RNA export. Involved in chromatin condensation and control of cell cycle (By similarity).</text>
</comment>
<comment type="subunit">
    <text evidence="2">Found in a nuclear export complex with RanGTP, exportin and pre-miRNA (By similarity).</text>
</comment>
<comment type="subcellular location">
    <subcellularLocation>
        <location evidence="1">Nucleus</location>
    </subcellularLocation>
</comment>
<comment type="similarity">
    <text evidence="3 4">Belongs to the small GTPase superfamily. Ran family.</text>
</comment>
<evidence type="ECO:0000250" key="1"/>
<evidence type="ECO:0000250" key="2">
    <source>
        <dbReference type="UniProtKB" id="P62825"/>
    </source>
</evidence>
<evidence type="ECO:0000255" key="3">
    <source>
        <dbReference type="PROSITE-ProRule" id="PRU00752"/>
    </source>
</evidence>
<evidence type="ECO:0000305" key="4"/>
<dbReference type="EMBL" id="AE016820">
    <property type="protein sequence ID" value="AAS54784.1"/>
    <property type="molecule type" value="Genomic_DNA"/>
</dbReference>
<dbReference type="RefSeq" id="NP_986960.1">
    <property type="nucleotide sequence ID" value="NM_212022.1"/>
</dbReference>
<dbReference type="SMR" id="Q74ZA9"/>
<dbReference type="FunCoup" id="Q74ZA9">
    <property type="interactions" value="1675"/>
</dbReference>
<dbReference type="STRING" id="284811.Q74ZA9"/>
<dbReference type="EnsemblFungi" id="AAS54784">
    <property type="protein sequence ID" value="AAS54784"/>
    <property type="gene ID" value="AGOS_AGR294C"/>
</dbReference>
<dbReference type="GeneID" id="4623263"/>
<dbReference type="KEGG" id="ago:AGOS_AGR294C"/>
<dbReference type="eggNOG" id="KOG0096">
    <property type="taxonomic scope" value="Eukaryota"/>
</dbReference>
<dbReference type="HOGENOM" id="CLU_041217_13_0_1"/>
<dbReference type="InParanoid" id="Q74ZA9"/>
<dbReference type="OMA" id="FNAWDTA"/>
<dbReference type="OrthoDB" id="48625at2759"/>
<dbReference type="Proteomes" id="UP000000591">
    <property type="component" value="Chromosome VII"/>
</dbReference>
<dbReference type="GO" id="GO:0005737">
    <property type="term" value="C:cytoplasm"/>
    <property type="evidence" value="ECO:0000318"/>
    <property type="project" value="GO_Central"/>
</dbReference>
<dbReference type="GO" id="GO:0005634">
    <property type="term" value="C:nucleus"/>
    <property type="evidence" value="ECO:0000318"/>
    <property type="project" value="GO_Central"/>
</dbReference>
<dbReference type="GO" id="GO:0005525">
    <property type="term" value="F:GTP binding"/>
    <property type="evidence" value="ECO:0007669"/>
    <property type="project" value="UniProtKB-KW"/>
</dbReference>
<dbReference type="GO" id="GO:0003924">
    <property type="term" value="F:GTPase activity"/>
    <property type="evidence" value="ECO:0000318"/>
    <property type="project" value="GO_Central"/>
</dbReference>
<dbReference type="GO" id="GO:0006606">
    <property type="term" value="P:protein import into nucleus"/>
    <property type="evidence" value="ECO:0000318"/>
    <property type="project" value="GO_Central"/>
</dbReference>
<dbReference type="GO" id="GO:0000054">
    <property type="term" value="P:ribosomal subunit export from nucleus"/>
    <property type="evidence" value="ECO:0000318"/>
    <property type="project" value="GO_Central"/>
</dbReference>
<dbReference type="CDD" id="cd00877">
    <property type="entry name" value="Ran"/>
    <property type="match status" value="1"/>
</dbReference>
<dbReference type="FunFam" id="3.40.50.300:FF:000131">
    <property type="entry name" value="GTP-binding nuclear protein Ran"/>
    <property type="match status" value="1"/>
</dbReference>
<dbReference type="Gene3D" id="3.40.50.300">
    <property type="entry name" value="P-loop containing nucleotide triphosphate hydrolases"/>
    <property type="match status" value="1"/>
</dbReference>
<dbReference type="InterPro" id="IPR027417">
    <property type="entry name" value="P-loop_NTPase"/>
</dbReference>
<dbReference type="InterPro" id="IPR002041">
    <property type="entry name" value="Ran_GTPase"/>
</dbReference>
<dbReference type="InterPro" id="IPR005225">
    <property type="entry name" value="Small_GTP-bd"/>
</dbReference>
<dbReference type="InterPro" id="IPR001806">
    <property type="entry name" value="Small_GTPase"/>
</dbReference>
<dbReference type="NCBIfam" id="TIGR00231">
    <property type="entry name" value="small_GTP"/>
    <property type="match status" value="1"/>
</dbReference>
<dbReference type="PANTHER" id="PTHR24071:SF0">
    <property type="entry name" value="GTP-BINDING NUCLEAR PROTEIN RAN"/>
    <property type="match status" value="1"/>
</dbReference>
<dbReference type="PANTHER" id="PTHR24071">
    <property type="entry name" value="RAN GTPASE"/>
    <property type="match status" value="1"/>
</dbReference>
<dbReference type="Pfam" id="PF00071">
    <property type="entry name" value="Ras"/>
    <property type="match status" value="1"/>
</dbReference>
<dbReference type="PRINTS" id="PR00627">
    <property type="entry name" value="GTPRANTC4"/>
</dbReference>
<dbReference type="SMART" id="SM00175">
    <property type="entry name" value="RAB"/>
    <property type="match status" value="1"/>
</dbReference>
<dbReference type="SMART" id="SM00176">
    <property type="entry name" value="RAN"/>
    <property type="match status" value="1"/>
</dbReference>
<dbReference type="SMART" id="SM00173">
    <property type="entry name" value="RAS"/>
    <property type="match status" value="1"/>
</dbReference>
<dbReference type="SMART" id="SM00174">
    <property type="entry name" value="RHO"/>
    <property type="match status" value="1"/>
</dbReference>
<dbReference type="SUPFAM" id="SSF52540">
    <property type="entry name" value="P-loop containing nucleoside triphosphate hydrolases"/>
    <property type="match status" value="1"/>
</dbReference>
<dbReference type="PROSITE" id="PS51418">
    <property type="entry name" value="RAN"/>
    <property type="match status" value="1"/>
</dbReference>
<gene>
    <name type="primary">GSP1</name>
    <name type="ordered locus">AGR294C</name>
</gene>
<keyword id="KW-0342">GTP-binding</keyword>
<keyword id="KW-0547">Nucleotide-binding</keyword>
<keyword id="KW-0539">Nucleus</keyword>
<keyword id="KW-0653">Protein transport</keyword>
<keyword id="KW-1185">Reference proteome</keyword>
<keyword id="KW-0813">Transport</keyword>